<keyword id="KW-0007">Acetylation</keyword>
<keyword id="KW-0025">Alternative splicing</keyword>
<keyword id="KW-0496">Mitochondrion</keyword>
<keyword id="KW-0521">NADP</keyword>
<keyword id="KW-0554">One-carbon metabolism</keyword>
<keyword id="KW-0560">Oxidoreductase</keyword>
<keyword id="KW-0596">Phosphopantetheine</keyword>
<keyword id="KW-0597">Phosphoprotein</keyword>
<keyword id="KW-1267">Proteomics identification</keyword>
<keyword id="KW-1185">Reference proteome</keyword>
<keyword id="KW-0809">Transit peptide</keyword>
<accession>Q3SY69</accession>
<accession>Q3SY68</accession>
<accession>Q68D62</accession>
<accession>Q6AI55</accession>
<accession>Q8N922</accession>
<comment type="function">
    <text evidence="7 8">Mitochondrial 10-formyltetrahydrofolate dehydrogenase that catalyzes the NADP(+)-dependent conversion of 10-formyltetrahydrofolate to tetrahydrofolate and carbon dioxide.</text>
</comment>
<comment type="catalytic activity">
    <reaction evidence="7">
        <text>(6R)-10-formyltetrahydrofolate + NADP(+) + H2O = (6S)-5,6,7,8-tetrahydrofolate + CO2 + NADPH + H(+)</text>
        <dbReference type="Rhea" id="RHEA:10180"/>
        <dbReference type="ChEBI" id="CHEBI:15377"/>
        <dbReference type="ChEBI" id="CHEBI:15378"/>
        <dbReference type="ChEBI" id="CHEBI:16526"/>
        <dbReference type="ChEBI" id="CHEBI:57453"/>
        <dbReference type="ChEBI" id="CHEBI:57783"/>
        <dbReference type="ChEBI" id="CHEBI:58349"/>
        <dbReference type="ChEBI" id="CHEBI:195366"/>
        <dbReference type="EC" id="1.5.1.6"/>
    </reaction>
    <physiologicalReaction direction="left-to-right" evidence="14">
        <dbReference type="Rhea" id="RHEA:10181"/>
    </physiologicalReaction>
</comment>
<comment type="interaction">
    <interactant intactId="EBI-6916128">
        <id>Q3SY69</id>
    </interactant>
    <interactant intactId="EBI-10714847">
        <id>O75891</id>
        <label>ALDH1L1</label>
    </interactant>
    <organismsDiffer>false</organismsDiffer>
    <experiments>2</experiments>
</comment>
<comment type="interaction">
    <interactant intactId="EBI-6916128">
        <id>Q3SY69</id>
    </interactant>
    <interactant intactId="EBI-466029">
        <id>P42858</id>
        <label>HTT</label>
    </interactant>
    <organismsDiffer>false</organismsDiffer>
    <experiments>3</experiments>
</comment>
<comment type="subcellular location">
    <subcellularLocation>
        <location evidence="6">Mitochondrion</location>
    </subcellularLocation>
</comment>
<comment type="alternative products">
    <event type="alternative splicing"/>
    <isoform>
        <id>Q3SY69-1</id>
        <name>1</name>
        <sequence type="displayed"/>
    </isoform>
    <isoform>
        <id>Q3SY69-2</id>
        <name>2</name>
        <sequence type="described" ref="VSP_030752 VSP_030753"/>
    </isoform>
    <isoform>
        <id>Q3SY69-3</id>
        <name>3</name>
        <sequence type="described" ref="VSP_030754 VSP_030755"/>
    </isoform>
</comment>
<comment type="tissue specificity">
    <text evidence="6">Highly expressed in pancreas, heart, brain and skeletal muscle.</text>
</comment>
<comment type="domain">
    <text evidence="2">The N-terminal hydrolase domain has an NADP-independent formyltetrahydrofolate hydrolase activity, releasing formate and tetrahydrofolate.</text>
</comment>
<comment type="domain">
    <text evidence="2">The C-terminal aldehyde dehydrogenase domain has an NADP-dependent dehydrogenase activity. It catalyzes the oxidation of formate, released by the hydrolysis of formyltetrahydrofolate, into CO2.</text>
</comment>
<comment type="domain">
    <text evidence="2 7">The carrier domain is phosphopantetheinylated and uses the 4'-phosphopantetheine/4'-PP swinging arm to transfer the formyl group released by the N-terminal formyltetrahydrofolate hydrolase activity to the C-terminal aldehyde dehydrogenase domain that catalyzes its NADP-dependent oxidation into CO2 (PubMed:21238436). The overall NADP-dependent physiological reaction requires the 3 domains (N-terminal hydrolase, C-terminal aldehyde dehydrogenase and carrier domains) to convert formyltetrahydrofolate into tetrahydrofolate and CO2 (By similarity).</text>
</comment>
<comment type="PTM">
    <text evidence="7">Phosphopantetheinylation at Ser-375 by AASDHPPT is required for the formyltetrahydrofolate dehydrogenase activity.</text>
</comment>
<comment type="similarity">
    <text evidence="12">In the N-terminal section; belongs to the GART family.</text>
</comment>
<comment type="similarity">
    <text evidence="12">In the C-terminal section; belongs to the aldehyde dehydrogenase family. ALDH1L subfamily.</text>
</comment>
<comment type="sequence caution" evidence="12">
    <conflict type="erroneous translation">
        <sequence resource="EMBL-CDS" id="AAI03936"/>
    </conflict>
    <text>Wrong choice of CDS.</text>
</comment>
<evidence type="ECO:0000250" key="1">
    <source>
        <dbReference type="UniProtKB" id="O75891"/>
    </source>
</evidence>
<evidence type="ECO:0000250" key="2">
    <source>
        <dbReference type="UniProtKB" id="P28037"/>
    </source>
</evidence>
<evidence type="ECO:0000250" key="3">
    <source>
        <dbReference type="UniProtKB" id="Q8K009"/>
    </source>
</evidence>
<evidence type="ECO:0000250" key="4">
    <source>
        <dbReference type="UniProtKB" id="Q8R0Y6"/>
    </source>
</evidence>
<evidence type="ECO:0000255" key="5">
    <source>
        <dbReference type="PROSITE-ProRule" id="PRU00258"/>
    </source>
</evidence>
<evidence type="ECO:0000269" key="6">
    <source>
    </source>
</evidence>
<evidence type="ECO:0000269" key="7">
    <source>
    </source>
</evidence>
<evidence type="ECO:0000269" key="8">
    <source>
    </source>
</evidence>
<evidence type="ECO:0000303" key="9">
    <source>
    </source>
</evidence>
<evidence type="ECO:0000303" key="10">
    <source>
    </source>
</evidence>
<evidence type="ECO:0000303" key="11">
    <source>
    </source>
</evidence>
<evidence type="ECO:0000305" key="12"/>
<evidence type="ECO:0000305" key="13">
    <source>
    </source>
</evidence>
<evidence type="ECO:0000305" key="14">
    <source>
    </source>
</evidence>
<evidence type="ECO:0000312" key="15">
    <source>
        <dbReference type="HGNC" id="HGNC:26777"/>
    </source>
</evidence>
<evidence type="ECO:0007744" key="16">
    <source>
    </source>
</evidence>
<proteinExistence type="evidence at protein level"/>
<organism>
    <name type="scientific">Homo sapiens</name>
    <name type="common">Human</name>
    <dbReference type="NCBI Taxonomy" id="9606"/>
    <lineage>
        <taxon>Eukaryota</taxon>
        <taxon>Metazoa</taxon>
        <taxon>Chordata</taxon>
        <taxon>Craniata</taxon>
        <taxon>Vertebrata</taxon>
        <taxon>Euteleostomi</taxon>
        <taxon>Mammalia</taxon>
        <taxon>Eutheria</taxon>
        <taxon>Euarchontoglires</taxon>
        <taxon>Primates</taxon>
        <taxon>Haplorrhini</taxon>
        <taxon>Catarrhini</taxon>
        <taxon>Hominidae</taxon>
        <taxon>Homo</taxon>
    </lineage>
</organism>
<gene>
    <name evidence="11 15" type="primary">ALDH1L2</name>
</gene>
<dbReference type="EC" id="1.5.1.6" evidence="7"/>
<dbReference type="EMBL" id="BC103934">
    <property type="protein sequence ID" value="AAI03935.1"/>
    <property type="molecule type" value="mRNA"/>
</dbReference>
<dbReference type="EMBL" id="BC103935">
    <property type="protein sequence ID" value="AAI03936.1"/>
    <property type="status" value="ALT_SEQ"/>
    <property type="molecule type" value="mRNA"/>
</dbReference>
<dbReference type="EMBL" id="AK095827">
    <property type="protein sequence ID" value="BAC04634.1"/>
    <property type="molecule type" value="mRNA"/>
</dbReference>
<dbReference type="EMBL" id="CR627287">
    <property type="protein sequence ID" value="CAH10368.1"/>
    <property type="status" value="ALT_TERM"/>
    <property type="molecule type" value="mRNA"/>
</dbReference>
<dbReference type="EMBL" id="CR749561">
    <property type="protein sequence ID" value="CAH18358.1"/>
    <property type="molecule type" value="mRNA"/>
</dbReference>
<dbReference type="CCDS" id="CCDS31891.1">
    <molecule id="Q3SY69-1"/>
</dbReference>
<dbReference type="RefSeq" id="NP_001029345.2">
    <molecule id="Q3SY69-1"/>
    <property type="nucleotide sequence ID" value="NM_001034173.4"/>
</dbReference>
<dbReference type="RefSeq" id="XP_011536291.1">
    <molecule id="Q3SY69-3"/>
    <property type="nucleotide sequence ID" value="XM_011537989.4"/>
</dbReference>
<dbReference type="RefSeq" id="XP_054227218.1">
    <molecule id="Q3SY69-3"/>
    <property type="nucleotide sequence ID" value="XM_054371243.1"/>
</dbReference>
<dbReference type="SMR" id="Q3SY69"/>
<dbReference type="BioGRID" id="127759">
    <property type="interactions" value="42"/>
</dbReference>
<dbReference type="FunCoup" id="Q3SY69">
    <property type="interactions" value="476"/>
</dbReference>
<dbReference type="IntAct" id="Q3SY69">
    <property type="interactions" value="17"/>
</dbReference>
<dbReference type="MINT" id="Q3SY69"/>
<dbReference type="STRING" id="9606.ENSP00000258494"/>
<dbReference type="GlyGen" id="Q3SY69">
    <property type="glycosylation" value="1 site, 1 O-linked glycan (1 site)"/>
</dbReference>
<dbReference type="iPTMnet" id="Q3SY69"/>
<dbReference type="PhosphoSitePlus" id="Q3SY69"/>
<dbReference type="BioMuta" id="ALDH1L2"/>
<dbReference type="DMDM" id="166198355"/>
<dbReference type="jPOST" id="Q3SY69"/>
<dbReference type="MassIVE" id="Q3SY69"/>
<dbReference type="PaxDb" id="9606-ENSP00000258494"/>
<dbReference type="PeptideAtlas" id="Q3SY69"/>
<dbReference type="ProteomicsDB" id="61843">
    <molecule id="Q3SY69-1"/>
</dbReference>
<dbReference type="ProteomicsDB" id="61844">
    <molecule id="Q3SY69-2"/>
</dbReference>
<dbReference type="ProteomicsDB" id="61845">
    <molecule id="Q3SY69-3"/>
</dbReference>
<dbReference type="Pumba" id="Q3SY69"/>
<dbReference type="Antibodypedia" id="30615">
    <property type="antibodies" value="95 antibodies from 22 providers"/>
</dbReference>
<dbReference type="DNASU" id="160428"/>
<dbReference type="Ensembl" id="ENST00000258494.14">
    <molecule id="Q3SY69-1"/>
    <property type="protein sequence ID" value="ENSP00000258494.9"/>
    <property type="gene ID" value="ENSG00000136010.14"/>
</dbReference>
<dbReference type="Ensembl" id="ENST00000552270.1">
    <molecule id="Q3SY69-2"/>
    <property type="protein sequence ID" value="ENSP00000447538.1"/>
    <property type="gene ID" value="ENSG00000136010.14"/>
</dbReference>
<dbReference type="GeneID" id="160428"/>
<dbReference type="KEGG" id="hsa:160428"/>
<dbReference type="MANE-Select" id="ENST00000258494.14">
    <property type="protein sequence ID" value="ENSP00000258494.9"/>
    <property type="RefSeq nucleotide sequence ID" value="NM_001034173.4"/>
    <property type="RefSeq protein sequence ID" value="NP_001029345.2"/>
</dbReference>
<dbReference type="UCSC" id="uc001tlc.4">
    <molecule id="Q3SY69-1"/>
    <property type="organism name" value="human"/>
</dbReference>
<dbReference type="AGR" id="HGNC:26777"/>
<dbReference type="CTD" id="160428"/>
<dbReference type="DisGeNET" id="160428"/>
<dbReference type="GeneCards" id="ALDH1L2"/>
<dbReference type="HGNC" id="HGNC:26777">
    <property type="gene designation" value="ALDH1L2"/>
</dbReference>
<dbReference type="HPA" id="ENSG00000136010">
    <property type="expression patterns" value="Group enriched (pancreas, salivary gland)"/>
</dbReference>
<dbReference type="MIM" id="613584">
    <property type="type" value="gene"/>
</dbReference>
<dbReference type="neXtProt" id="NX_Q3SY69"/>
<dbReference type="OpenTargets" id="ENSG00000136010"/>
<dbReference type="PharmGKB" id="PA134928545"/>
<dbReference type="VEuPathDB" id="HostDB:ENSG00000136010"/>
<dbReference type="eggNOG" id="KOG2452">
    <property type="taxonomic scope" value="Eukaryota"/>
</dbReference>
<dbReference type="GeneTree" id="ENSGT00940000158018"/>
<dbReference type="HOGENOM" id="CLU_014974_0_0_1"/>
<dbReference type="InParanoid" id="Q3SY69"/>
<dbReference type="OMA" id="NEQVFMA"/>
<dbReference type="OrthoDB" id="310895at2759"/>
<dbReference type="PAN-GO" id="Q3SY69">
    <property type="GO annotations" value="2 GO annotations based on evolutionary models"/>
</dbReference>
<dbReference type="PhylomeDB" id="Q3SY69"/>
<dbReference type="TreeFam" id="TF354242"/>
<dbReference type="BioCyc" id="MetaCyc:HS06100-MONOMER"/>
<dbReference type="BRENDA" id="1.5.1.6">
    <property type="organism ID" value="2681"/>
</dbReference>
<dbReference type="PathwayCommons" id="Q3SY69"/>
<dbReference type="Reactome" id="R-HSA-196757">
    <property type="pathway name" value="Metabolism of folate and pterines"/>
</dbReference>
<dbReference type="SignaLink" id="Q3SY69"/>
<dbReference type="BioGRID-ORCS" id="160428">
    <property type="hits" value="7 hits in 1155 CRISPR screens"/>
</dbReference>
<dbReference type="ChiTaRS" id="ALDH1L2">
    <property type="organism name" value="human"/>
</dbReference>
<dbReference type="GeneWiki" id="ALDH1L2"/>
<dbReference type="GenomeRNAi" id="160428"/>
<dbReference type="Pharos" id="Q3SY69">
    <property type="development level" value="Tbio"/>
</dbReference>
<dbReference type="PRO" id="PR:Q3SY69"/>
<dbReference type="Proteomes" id="UP000005640">
    <property type="component" value="Chromosome 12"/>
</dbReference>
<dbReference type="RNAct" id="Q3SY69">
    <property type="molecule type" value="protein"/>
</dbReference>
<dbReference type="Bgee" id="ENSG00000136010">
    <property type="expression patterns" value="Expressed in tibia and 160 other cell types or tissues"/>
</dbReference>
<dbReference type="ExpressionAtlas" id="Q3SY69">
    <property type="expression patterns" value="baseline and differential"/>
</dbReference>
<dbReference type="GO" id="GO:0070062">
    <property type="term" value="C:extracellular exosome"/>
    <property type="evidence" value="ECO:0007005"/>
    <property type="project" value="UniProtKB"/>
</dbReference>
<dbReference type="GO" id="GO:0005759">
    <property type="term" value="C:mitochondrial matrix"/>
    <property type="evidence" value="ECO:0000304"/>
    <property type="project" value="Reactome"/>
</dbReference>
<dbReference type="GO" id="GO:0005739">
    <property type="term" value="C:mitochondrion"/>
    <property type="evidence" value="ECO:0000314"/>
    <property type="project" value="HPA"/>
</dbReference>
<dbReference type="GO" id="GO:0005654">
    <property type="term" value="C:nucleoplasm"/>
    <property type="evidence" value="ECO:0000314"/>
    <property type="project" value="HPA"/>
</dbReference>
<dbReference type="GO" id="GO:0004029">
    <property type="term" value="F:aldehyde dehydrogenase (NAD+) activity"/>
    <property type="evidence" value="ECO:0000318"/>
    <property type="project" value="GO_Central"/>
</dbReference>
<dbReference type="GO" id="GO:0016155">
    <property type="term" value="F:formyltetrahydrofolate dehydrogenase activity"/>
    <property type="evidence" value="ECO:0000314"/>
    <property type="project" value="UniProtKB"/>
</dbReference>
<dbReference type="GO" id="GO:0009258">
    <property type="term" value="P:10-formyltetrahydrofolate catabolic process"/>
    <property type="evidence" value="ECO:0000314"/>
    <property type="project" value="UniProtKB"/>
</dbReference>
<dbReference type="GO" id="GO:0009058">
    <property type="term" value="P:biosynthetic process"/>
    <property type="evidence" value="ECO:0007669"/>
    <property type="project" value="InterPro"/>
</dbReference>
<dbReference type="GO" id="GO:0006635">
    <property type="term" value="P:fatty acid beta-oxidation"/>
    <property type="evidence" value="ECO:0007669"/>
    <property type="project" value="Ensembl"/>
</dbReference>
<dbReference type="GO" id="GO:0046655">
    <property type="term" value="P:folic acid metabolic process"/>
    <property type="evidence" value="ECO:0007669"/>
    <property type="project" value="Ensembl"/>
</dbReference>
<dbReference type="GO" id="GO:0006740">
    <property type="term" value="P:NADPH regeneration"/>
    <property type="evidence" value="ECO:0000314"/>
    <property type="project" value="UniProtKB"/>
</dbReference>
<dbReference type="GO" id="GO:0006730">
    <property type="term" value="P:one-carbon metabolic process"/>
    <property type="evidence" value="ECO:0007669"/>
    <property type="project" value="UniProtKB-KW"/>
</dbReference>
<dbReference type="CDD" id="cd07140">
    <property type="entry name" value="ALDH_F1L_FTFDH"/>
    <property type="match status" value="1"/>
</dbReference>
<dbReference type="CDD" id="cd08703">
    <property type="entry name" value="FDH_Hydrolase_C"/>
    <property type="match status" value="1"/>
</dbReference>
<dbReference type="CDD" id="cd08647">
    <property type="entry name" value="FMT_core_FDH_N"/>
    <property type="match status" value="1"/>
</dbReference>
<dbReference type="FunFam" id="1.10.1200.10:FF:000002">
    <property type="entry name" value="10-formyltetrahydrofolate dehydrogenase"/>
    <property type="match status" value="1"/>
</dbReference>
<dbReference type="FunFam" id="3.10.25.10:FF:000002">
    <property type="entry name" value="10-formyltetrahydrofolate dehydrogenase"/>
    <property type="match status" value="1"/>
</dbReference>
<dbReference type="FunFam" id="3.40.50.170:FF:000002">
    <property type="entry name" value="10-formyltetrahydrofolate dehydrogenase"/>
    <property type="match status" value="1"/>
</dbReference>
<dbReference type="FunFam" id="3.40.605.10:FF:000026">
    <property type="entry name" value="Aldehyde dehydrogenase, putative"/>
    <property type="match status" value="1"/>
</dbReference>
<dbReference type="FunFam" id="3.40.309.10:FF:000008">
    <property type="entry name" value="Cytosolic 10-formyltetrahydrofolate dehydrogenase"/>
    <property type="match status" value="1"/>
</dbReference>
<dbReference type="FunFam" id="3.40.605.10:FF:000009">
    <property type="entry name" value="Cytosolic 10-formyltetrahydrofolate dehydrogenase"/>
    <property type="match status" value="1"/>
</dbReference>
<dbReference type="Gene3D" id="1.10.1200.10">
    <property type="entry name" value="ACP-like"/>
    <property type="match status" value="1"/>
</dbReference>
<dbReference type="Gene3D" id="3.40.605.10">
    <property type="entry name" value="Aldehyde Dehydrogenase, Chain A, domain 1"/>
    <property type="match status" value="1"/>
</dbReference>
<dbReference type="Gene3D" id="3.40.309.10">
    <property type="entry name" value="Aldehyde Dehydrogenase, Chain A, domain 2"/>
    <property type="match status" value="1"/>
</dbReference>
<dbReference type="Gene3D" id="3.10.25.10">
    <property type="entry name" value="Formyl transferase, C-terminal domain"/>
    <property type="match status" value="1"/>
</dbReference>
<dbReference type="Gene3D" id="3.40.50.170">
    <property type="entry name" value="Formyl transferase, N-terminal domain"/>
    <property type="match status" value="1"/>
</dbReference>
<dbReference type="InterPro" id="IPR011407">
    <property type="entry name" value="10_FTHF_DH"/>
</dbReference>
<dbReference type="InterPro" id="IPR036736">
    <property type="entry name" value="ACP-like_sf"/>
</dbReference>
<dbReference type="InterPro" id="IPR016161">
    <property type="entry name" value="Ald_DH/histidinol_DH"/>
</dbReference>
<dbReference type="InterPro" id="IPR016163">
    <property type="entry name" value="Ald_DH_C"/>
</dbReference>
<dbReference type="InterPro" id="IPR016160">
    <property type="entry name" value="Ald_DH_CS_CYS"/>
</dbReference>
<dbReference type="InterPro" id="IPR029510">
    <property type="entry name" value="Ald_DH_CS_GLU"/>
</dbReference>
<dbReference type="InterPro" id="IPR016162">
    <property type="entry name" value="Ald_DH_N"/>
</dbReference>
<dbReference type="InterPro" id="IPR015590">
    <property type="entry name" value="Aldehyde_DH_dom"/>
</dbReference>
<dbReference type="InterPro" id="IPR005793">
    <property type="entry name" value="Formyl_trans_C"/>
</dbReference>
<dbReference type="InterPro" id="IPR037022">
    <property type="entry name" value="Formyl_trans_C_sf"/>
</dbReference>
<dbReference type="InterPro" id="IPR002376">
    <property type="entry name" value="Formyl_transf_N"/>
</dbReference>
<dbReference type="InterPro" id="IPR036477">
    <property type="entry name" value="Formyl_transf_N_sf"/>
</dbReference>
<dbReference type="InterPro" id="IPR011034">
    <property type="entry name" value="Formyl_transferase-like_C_sf"/>
</dbReference>
<dbReference type="InterPro" id="IPR001555">
    <property type="entry name" value="GART_AS"/>
</dbReference>
<dbReference type="InterPro" id="IPR009081">
    <property type="entry name" value="PP-bd_ACP"/>
</dbReference>
<dbReference type="InterPro" id="IPR006162">
    <property type="entry name" value="Ppantetheine_attach_site"/>
</dbReference>
<dbReference type="PANTHER" id="PTHR11699">
    <property type="entry name" value="ALDEHYDE DEHYDROGENASE-RELATED"/>
    <property type="match status" value="1"/>
</dbReference>
<dbReference type="Pfam" id="PF00171">
    <property type="entry name" value="Aldedh"/>
    <property type="match status" value="1"/>
</dbReference>
<dbReference type="Pfam" id="PF02911">
    <property type="entry name" value="Formyl_trans_C"/>
    <property type="match status" value="1"/>
</dbReference>
<dbReference type="Pfam" id="PF00551">
    <property type="entry name" value="Formyl_trans_N"/>
    <property type="match status" value="1"/>
</dbReference>
<dbReference type="Pfam" id="PF00550">
    <property type="entry name" value="PP-binding"/>
    <property type="match status" value="1"/>
</dbReference>
<dbReference type="PIRSF" id="PIRSF036489">
    <property type="entry name" value="10-FTHFDH"/>
    <property type="match status" value="1"/>
</dbReference>
<dbReference type="SUPFAM" id="SSF53720">
    <property type="entry name" value="ALDH-like"/>
    <property type="match status" value="1"/>
</dbReference>
<dbReference type="SUPFAM" id="SSF50486">
    <property type="entry name" value="FMT C-terminal domain-like"/>
    <property type="match status" value="1"/>
</dbReference>
<dbReference type="SUPFAM" id="SSF53328">
    <property type="entry name" value="Formyltransferase"/>
    <property type="match status" value="1"/>
</dbReference>
<dbReference type="PROSITE" id="PS00070">
    <property type="entry name" value="ALDEHYDE_DEHYDR_CYS"/>
    <property type="match status" value="1"/>
</dbReference>
<dbReference type="PROSITE" id="PS00687">
    <property type="entry name" value="ALDEHYDE_DEHYDR_GLU"/>
    <property type="match status" value="1"/>
</dbReference>
<dbReference type="PROSITE" id="PS50075">
    <property type="entry name" value="CARRIER"/>
    <property type="match status" value="1"/>
</dbReference>
<dbReference type="PROSITE" id="PS00373">
    <property type="entry name" value="GART"/>
    <property type="match status" value="1"/>
</dbReference>
<dbReference type="PROSITE" id="PS00012">
    <property type="entry name" value="PHOSPHOPANTETHEINE"/>
    <property type="match status" value="1"/>
</dbReference>
<sequence>MLRRGSQALRRFSTGRVYFKNKLKLALIGQSLFGQEVYSHLRKEGHRVVGVFTVPDKDGKADPLALAAEKDGTPVFKLPKWRVKGKTIKEVAEAYRSVGAELNVLPFCTQFIPMDIIDSPKHGSIIYHPSILPRHRGASAINWTLIMGDKKAGFSVFWADDGLDTGPILLQRSCDVEPNDTVDALYNRFLFPEGIKAMVEAVQLIADGKAPRIPQPEEGATYEGIQKKENAEISWDQSAEVLHNWIRGHDKVPGAWTEINGQMVTFYGSTLLNSSVPPGEPLEIKGAKKPGLVTKNGLVLFGNDGKALTVRNLQFEDGKMIPASQYFSTGETSVVELTAEEVKVAETIKVIWAGILSNVPIIEDSTDFFKSGASSMDVARLVEEIRQKCGGLQLQNEDVYMATKFEGFIQKVVRKLRGEDQEVELVVDYISKEVNEIMVKMPYQCFINGQFTDADDGKTYDTINPTDGSTICKVSYASLADVDKAVAAAKDAFENGEWGRMNARERGRLMYRLADLLEENQEELATIEALDSGAVYTLALKTHIGMSVQTFRYFAGWCDKIQGSTIPINQARPNRNLTFTKKEPLGVCAIIIPWNYPLMMLAWKSAACLAAGNTLVLKPAQVTPLTALKFAELSVKAGFPKGVINIIPGSGGIAGQRLSEHPDIRKLGFTGSTPIGKQIMKSCAVSNLKKVSLELGGKSPLIIFNDCELDKAVRMGMGAVFFNKGENCIAAGRLFVEESIHDEFVTRVVEEIKKMKIGDPLDRSTDHGPQNHKAHLEKLLQYCETGVKEGATLVYGGRQVQRPGFFMEPTVFTDVEDYMYLAKEESFGPIMVISKFQNGDIDGVLQRANSTEYGLASGVFTRDINKAMYVSEKLEAGTVFINTYNKTDVAAPFGGVKQSGFGKDLGEEALNEYLKTKTVTLEY</sequence>
<reference key="1">
    <citation type="journal article" date="2004" name="Genome Res.">
        <title>The status, quality, and expansion of the NIH full-length cDNA project: the Mammalian Gene Collection (MGC).</title>
        <authorList>
            <consortium name="The MGC Project Team"/>
        </authorList>
    </citation>
    <scope>NUCLEOTIDE SEQUENCE [LARGE SCALE MRNA] (ISOFORMS 1 AND 2)</scope>
</reference>
<reference key="2">
    <citation type="journal article" date="2004" name="Nat. Genet.">
        <title>Complete sequencing and characterization of 21,243 full-length human cDNAs.</title>
        <authorList>
            <person name="Ota T."/>
            <person name="Suzuki Y."/>
            <person name="Nishikawa T."/>
            <person name="Otsuki T."/>
            <person name="Sugiyama T."/>
            <person name="Irie R."/>
            <person name="Wakamatsu A."/>
            <person name="Hayashi K."/>
            <person name="Sato H."/>
            <person name="Nagai K."/>
            <person name="Kimura K."/>
            <person name="Makita H."/>
            <person name="Sekine M."/>
            <person name="Obayashi M."/>
            <person name="Nishi T."/>
            <person name="Shibahara T."/>
            <person name="Tanaka T."/>
            <person name="Ishii S."/>
            <person name="Yamamoto J."/>
            <person name="Saito K."/>
            <person name="Kawai Y."/>
            <person name="Isono Y."/>
            <person name="Nakamura Y."/>
            <person name="Nagahari K."/>
            <person name="Murakami K."/>
            <person name="Yasuda T."/>
            <person name="Iwayanagi T."/>
            <person name="Wagatsuma M."/>
            <person name="Shiratori A."/>
            <person name="Sudo H."/>
            <person name="Hosoiri T."/>
            <person name="Kaku Y."/>
            <person name="Kodaira H."/>
            <person name="Kondo H."/>
            <person name="Sugawara M."/>
            <person name="Takahashi M."/>
            <person name="Kanda K."/>
            <person name="Yokoi T."/>
            <person name="Furuya T."/>
            <person name="Kikkawa E."/>
            <person name="Omura Y."/>
            <person name="Abe K."/>
            <person name="Kamihara K."/>
            <person name="Katsuta N."/>
            <person name="Sato K."/>
            <person name="Tanikawa M."/>
            <person name="Yamazaki M."/>
            <person name="Ninomiya K."/>
            <person name="Ishibashi T."/>
            <person name="Yamashita H."/>
            <person name="Murakawa K."/>
            <person name="Fujimori K."/>
            <person name="Tanai H."/>
            <person name="Kimata M."/>
            <person name="Watanabe M."/>
            <person name="Hiraoka S."/>
            <person name="Chiba Y."/>
            <person name="Ishida S."/>
            <person name="Ono Y."/>
            <person name="Takiguchi S."/>
            <person name="Watanabe S."/>
            <person name="Yosida M."/>
            <person name="Hotuta T."/>
            <person name="Kusano J."/>
            <person name="Kanehori K."/>
            <person name="Takahashi-Fujii A."/>
            <person name="Hara H."/>
            <person name="Tanase T.-O."/>
            <person name="Nomura Y."/>
            <person name="Togiya S."/>
            <person name="Komai F."/>
            <person name="Hara R."/>
            <person name="Takeuchi K."/>
            <person name="Arita M."/>
            <person name="Imose N."/>
            <person name="Musashino K."/>
            <person name="Yuuki H."/>
            <person name="Oshima A."/>
            <person name="Sasaki N."/>
            <person name="Aotsuka S."/>
            <person name="Yoshikawa Y."/>
            <person name="Matsunawa H."/>
            <person name="Ichihara T."/>
            <person name="Shiohata N."/>
            <person name="Sano S."/>
            <person name="Moriya S."/>
            <person name="Momiyama H."/>
            <person name="Satoh N."/>
            <person name="Takami S."/>
            <person name="Terashima Y."/>
            <person name="Suzuki O."/>
            <person name="Nakagawa S."/>
            <person name="Senoh A."/>
            <person name="Mizoguchi H."/>
            <person name="Goto Y."/>
            <person name="Shimizu F."/>
            <person name="Wakebe H."/>
            <person name="Hishigaki H."/>
            <person name="Watanabe T."/>
            <person name="Sugiyama A."/>
            <person name="Takemoto M."/>
            <person name="Kawakami B."/>
            <person name="Yamazaki M."/>
            <person name="Watanabe K."/>
            <person name="Kumagai A."/>
            <person name="Itakura S."/>
            <person name="Fukuzumi Y."/>
            <person name="Fujimori Y."/>
            <person name="Komiyama M."/>
            <person name="Tashiro H."/>
            <person name="Tanigami A."/>
            <person name="Fujiwara T."/>
            <person name="Ono T."/>
            <person name="Yamada K."/>
            <person name="Fujii Y."/>
            <person name="Ozaki K."/>
            <person name="Hirao M."/>
            <person name="Ohmori Y."/>
            <person name="Kawabata A."/>
            <person name="Hikiji T."/>
            <person name="Kobatake N."/>
            <person name="Inagaki H."/>
            <person name="Ikema Y."/>
            <person name="Okamoto S."/>
            <person name="Okitani R."/>
            <person name="Kawakami T."/>
            <person name="Noguchi S."/>
            <person name="Itoh T."/>
            <person name="Shigeta K."/>
            <person name="Senba T."/>
            <person name="Matsumura K."/>
            <person name="Nakajima Y."/>
            <person name="Mizuno T."/>
            <person name="Morinaga M."/>
            <person name="Sasaki M."/>
            <person name="Togashi T."/>
            <person name="Oyama M."/>
            <person name="Hata H."/>
            <person name="Watanabe M."/>
            <person name="Komatsu T."/>
            <person name="Mizushima-Sugano J."/>
            <person name="Satoh T."/>
            <person name="Shirai Y."/>
            <person name="Takahashi Y."/>
            <person name="Nakagawa K."/>
            <person name="Okumura K."/>
            <person name="Nagase T."/>
            <person name="Nomura N."/>
            <person name="Kikuchi H."/>
            <person name="Masuho Y."/>
            <person name="Yamashita R."/>
            <person name="Nakai K."/>
            <person name="Yada T."/>
            <person name="Nakamura Y."/>
            <person name="Ohara O."/>
            <person name="Isogai T."/>
            <person name="Sugano S."/>
        </authorList>
    </citation>
    <scope>NUCLEOTIDE SEQUENCE [LARGE SCALE MRNA] OF 1-752 (ISOFORM 1)</scope>
    <source>
        <tissue>Chondrocyte</tissue>
    </source>
</reference>
<reference key="3">
    <citation type="journal article" date="2007" name="BMC Genomics">
        <title>The full-ORF clone resource of the German cDNA consortium.</title>
        <authorList>
            <person name="Bechtel S."/>
            <person name="Rosenfelder H."/>
            <person name="Duda A."/>
            <person name="Schmidt C.P."/>
            <person name="Ernst U."/>
            <person name="Wellenreuther R."/>
            <person name="Mehrle A."/>
            <person name="Schuster C."/>
            <person name="Bahr A."/>
            <person name="Bloecker H."/>
            <person name="Heubner D."/>
            <person name="Hoerlein A."/>
            <person name="Michel G."/>
            <person name="Wedler H."/>
            <person name="Koehrer K."/>
            <person name="Ottenwaelder B."/>
            <person name="Poustka A."/>
            <person name="Wiemann S."/>
            <person name="Schupp I."/>
        </authorList>
    </citation>
    <scope>NUCLEOTIDE SEQUENCE [LARGE SCALE MRNA] OF 221-511 (ISOFORM 3)</scope>
    <scope>NUCLEOTIDE SEQUENCE [LARGE SCALE MRNA] OF 762-923 (ISOFORM 1)</scope>
    <source>
        <tissue>Cervix</tissue>
        <tissue>Uterus</tissue>
    </source>
</reference>
<reference key="4">
    <citation type="journal article" date="2009" name="Science">
        <title>Lysine acetylation targets protein complexes and co-regulates major cellular functions.</title>
        <authorList>
            <person name="Choudhary C."/>
            <person name="Kumar C."/>
            <person name="Gnad F."/>
            <person name="Nielsen M.L."/>
            <person name="Rehman M."/>
            <person name="Walther T.C."/>
            <person name="Olsen J.V."/>
            <person name="Mann M."/>
        </authorList>
    </citation>
    <scope>ACETYLATION [LARGE SCALE ANALYSIS] AT LYS-903</scope>
    <scope>IDENTIFICATION BY MASS SPECTROMETRY [LARGE SCALE ANALYSIS]</scope>
</reference>
<reference key="5">
    <citation type="journal article" date="2010" name="J. Biol. Chem.">
        <title>ALDH1L2 is the mitochondrial homolog of 10-formyltetrahydrofolate dehydrogenase.</title>
        <authorList>
            <person name="Krupenko N.I."/>
            <person name="Dubard M.E."/>
            <person name="Strickland K.C."/>
            <person name="Moxley K.M."/>
            <person name="Oleinik N.V."/>
            <person name="Krupenko S.A."/>
        </authorList>
    </citation>
    <scope>SUBCELLULAR LOCATION</scope>
    <scope>TISSUE SPECIFICITY</scope>
</reference>
<reference key="6">
    <citation type="journal article" date="2011" name="Chem. Biol. Interact.">
        <title>Enzymatic properties of ALDH1L2, a mitochondrial 10-formyltetrahydrofolate dehydrogenase.</title>
        <authorList>
            <person name="Strickland K.C."/>
            <person name="Krupenko N.I."/>
            <person name="Dubard M.E."/>
            <person name="Hu C.J."/>
            <person name="Tsybovsky Y."/>
            <person name="Krupenko S.A."/>
        </authorList>
    </citation>
    <scope>FUNCTION</scope>
    <scope>CATALYTIC ACTIVITY</scope>
    <scope>PHOSPHOPANTETHEINYLATION AT SER-375</scope>
    <scope>DOMAIN</scope>
    <scope>MUTAGENESIS OF SER-374 AND SER-375</scope>
</reference>
<reference key="7">
    <citation type="journal article" date="2015" name="Proteomics">
        <title>N-terminome analysis of the human mitochondrial proteome.</title>
        <authorList>
            <person name="Vaca Jacome A.S."/>
            <person name="Rabilloud T."/>
            <person name="Schaeffer-Reiss C."/>
            <person name="Rompais M."/>
            <person name="Ayoub D."/>
            <person name="Lane L."/>
            <person name="Bairoch A."/>
            <person name="Van Dorsselaer A."/>
            <person name="Carapito C."/>
        </authorList>
    </citation>
    <scope>IDENTIFICATION BY MASS SPECTROMETRY [LARGE SCALE ANALYSIS]</scope>
</reference>
<reference key="8">
    <citation type="journal article" date="2024" name="Clin. Genet.">
        <title>Further delineation of the phenotypic and metabolomic profile of ALDH1L2-related neurodevelopmental disorder.</title>
        <authorList>
            <person name="You M."/>
            <person name="Shamseldin H.E."/>
            <person name="Fogle H.M."/>
            <person name="Rushing B.R."/>
            <person name="Al Malki R.H."/>
            <person name="Jaafar A."/>
            <person name="Hashem M."/>
            <person name="Abdulwahab F."/>
            <person name="Abdel Rahman A.M."/>
            <person name="Krupenko N.I."/>
            <person name="Alkuraya F.S."/>
            <person name="Krupenko S.A."/>
        </authorList>
    </citation>
    <scope>VARIANT HIS-133</scope>
    <scope>CHARACTERIZATION OF VARIANT HIS-133</scope>
    <scope>FUNCTION</scope>
</reference>
<feature type="chain" id="PRO_0000316001" description="Mitochondrial 10-formyltetrahydrofolate dehydrogenase">
    <location>
        <begin position="1"/>
        <end position="923"/>
    </location>
</feature>
<feature type="transit peptide" description="Mitochondrion; not cleaved" evidence="13">
    <location>
        <begin position="1"/>
        <end position="19"/>
    </location>
</feature>
<feature type="domain" description="Carrier" evidence="5">
    <location>
        <begin position="339"/>
        <end position="416"/>
    </location>
</feature>
<feature type="region of interest" description="Hydrolase domain" evidence="2">
    <location>
        <begin position="23"/>
        <end position="331"/>
    </location>
</feature>
<feature type="region of interest" description="Aldehyde dehydrogenase domain" evidence="2">
    <location>
        <begin position="438"/>
        <end position="923"/>
    </location>
</feature>
<feature type="active site" description="Proton donor" evidence="2">
    <location>
        <position position="128"/>
    </location>
</feature>
<feature type="active site" description="Proton acceptor" evidence="2">
    <location>
        <position position="694"/>
    </location>
</feature>
<feature type="active site" description="Proton donor" evidence="2">
    <location>
        <position position="728"/>
    </location>
</feature>
<feature type="binding site" evidence="1">
    <location>
        <begin position="110"/>
        <end position="112"/>
    </location>
    <ligand>
        <name>(6R)-10-formyltetrahydrofolate</name>
        <dbReference type="ChEBI" id="CHEBI:195366"/>
    </ligand>
</feature>
<feature type="binding site" evidence="1">
    <location>
        <position position="164"/>
    </location>
    <ligand>
        <name>(6R)-10-formyltetrahydrofolate</name>
        <dbReference type="ChEBI" id="CHEBI:195366"/>
    </ligand>
</feature>
<feature type="binding site" evidence="2">
    <location>
        <begin position="592"/>
        <end position="594"/>
    </location>
    <ligand>
        <name>NADP(+)</name>
        <dbReference type="ChEBI" id="CHEBI:58349"/>
    </ligand>
</feature>
<feature type="binding site" evidence="2">
    <location>
        <begin position="618"/>
        <end position="621"/>
    </location>
    <ligand>
        <name>NADP(+)</name>
        <dbReference type="ChEBI" id="CHEBI:58349"/>
    </ligand>
</feature>
<feature type="binding site" evidence="2">
    <location>
        <begin position="651"/>
        <end position="656"/>
    </location>
    <ligand>
        <name>NADP(+)</name>
        <dbReference type="ChEBI" id="CHEBI:58349"/>
    </ligand>
</feature>
<feature type="binding site" evidence="2">
    <location>
        <begin position="671"/>
        <end position="672"/>
    </location>
    <ligand>
        <name>NADP(+)</name>
        <dbReference type="ChEBI" id="CHEBI:58349"/>
    </ligand>
</feature>
<feature type="binding site" evidence="2">
    <location>
        <begin position="694"/>
        <end position="695"/>
    </location>
    <ligand>
        <name>NADP(+)</name>
        <dbReference type="ChEBI" id="CHEBI:58349"/>
    </ligand>
</feature>
<feature type="binding site" evidence="2">
    <location>
        <position position="778"/>
    </location>
    <ligand>
        <name>NADP(+)</name>
        <dbReference type="ChEBI" id="CHEBI:58349"/>
    </ligand>
</feature>
<feature type="binding site" evidence="2">
    <location>
        <begin position="825"/>
        <end position="827"/>
    </location>
    <ligand>
        <name>NADP(+)</name>
        <dbReference type="ChEBI" id="CHEBI:58349"/>
    </ligand>
</feature>
<feature type="site" description="Essential for catalytic activity" evidence="2">
    <location>
        <position position="164"/>
    </location>
</feature>
<feature type="modified residue" description="Phosphoserine" evidence="1">
    <location>
        <position position="31"/>
    </location>
</feature>
<feature type="modified residue" description="N6-succinyllysine" evidence="4">
    <location>
        <position position="60"/>
    </location>
</feature>
<feature type="modified residue" description="O-(pantetheine 4'-phosphoryl)serine" evidence="5 7">
    <location>
        <position position="375"/>
    </location>
</feature>
<feature type="modified residue" description="Phosphoserine" evidence="1">
    <location>
        <position position="650"/>
    </location>
</feature>
<feature type="modified residue" description="N6-succinyllysine" evidence="3">
    <location>
        <position position="681"/>
    </location>
</feature>
<feature type="modified residue" description="N6-succinyllysine" evidence="4">
    <location>
        <position position="788"/>
    </location>
</feature>
<feature type="modified residue" description="N6-acetyllysine" evidence="16">
    <location>
        <position position="903"/>
    </location>
</feature>
<feature type="splice variant" id="VSP_030752" description="In isoform 2." evidence="9">
    <original>VEAVQ</original>
    <variation>KLSNS</variation>
    <location>
        <begin position="199"/>
        <end position="203"/>
    </location>
</feature>
<feature type="splice variant" id="VSP_030753" description="In isoform 2." evidence="9">
    <location>
        <begin position="204"/>
        <end position="923"/>
    </location>
</feature>
<feature type="splice variant" id="VSP_030754" description="In isoform 3." evidence="10">
    <original>RLADL</original>
    <variation>SMRMN</variation>
    <location>
        <begin position="512"/>
        <end position="516"/>
    </location>
</feature>
<feature type="splice variant" id="VSP_030755" description="In isoform 3." evidence="10">
    <location>
        <begin position="517"/>
        <end position="923"/>
    </location>
</feature>
<feature type="sequence variant" id="VAR_089219" description="Found in a patient with neurodevelopmental disorder; uncertain significance; loss of formyltetrahydrofolate dehydrogenase activity." evidence="8">
    <original>P</original>
    <variation>H</variation>
    <location>
        <position position="133"/>
    </location>
</feature>
<feature type="mutagenesis site" description="No effect on phosphopantetheinylation." evidence="7">
    <original>S</original>
    <variation>A</variation>
    <location>
        <position position="374"/>
    </location>
</feature>
<feature type="mutagenesis site" description="Loss of phosphopantetheinylation." evidence="7">
    <original>S</original>
    <variation>A</variation>
    <location>
        <position position="375"/>
    </location>
</feature>
<feature type="sequence conflict" description="In Ref. 1; AAI03935." evidence="12" ref="1">
    <original>A</original>
    <variation>T</variation>
    <location>
        <position position="712"/>
    </location>
</feature>
<name>AL1L2_HUMAN</name>
<protein>
    <recommendedName>
        <fullName evidence="14">Mitochondrial 10-formyltetrahydrofolate dehydrogenase</fullName>
        <shortName evidence="11">Mitochondrial 10-FTHFDH</shortName>
        <shortName evidence="11">mtFDH</shortName>
        <ecNumber evidence="7">1.5.1.6</ecNumber>
    </recommendedName>
    <alternativeName>
        <fullName evidence="11">Aldehyde dehydrogenase family 1 member L2</fullName>
    </alternativeName>
</protein>